<proteinExistence type="inferred from homology"/>
<organism>
    <name type="scientific">Petrotoga mobilis (strain DSM 10674 / SJ95)</name>
    <dbReference type="NCBI Taxonomy" id="403833"/>
    <lineage>
        <taxon>Bacteria</taxon>
        <taxon>Thermotogati</taxon>
        <taxon>Thermotogota</taxon>
        <taxon>Thermotogae</taxon>
        <taxon>Petrotogales</taxon>
        <taxon>Petrotogaceae</taxon>
        <taxon>Petrotoga</taxon>
    </lineage>
</organism>
<name>ATPA_PETMO</name>
<dbReference type="EC" id="7.1.2.2" evidence="1"/>
<dbReference type="EMBL" id="CP000879">
    <property type="protein sequence ID" value="ABX31471.1"/>
    <property type="molecule type" value="Genomic_DNA"/>
</dbReference>
<dbReference type="RefSeq" id="WP_012208574.1">
    <property type="nucleotide sequence ID" value="NC_010003.1"/>
</dbReference>
<dbReference type="SMR" id="A9BFX5"/>
<dbReference type="STRING" id="403833.Pmob_0747"/>
<dbReference type="KEGG" id="pmo:Pmob_0747"/>
<dbReference type="eggNOG" id="COG0056">
    <property type="taxonomic scope" value="Bacteria"/>
</dbReference>
<dbReference type="HOGENOM" id="CLU_010091_2_1_0"/>
<dbReference type="OrthoDB" id="9803053at2"/>
<dbReference type="Proteomes" id="UP000000789">
    <property type="component" value="Chromosome"/>
</dbReference>
<dbReference type="GO" id="GO:0005886">
    <property type="term" value="C:plasma membrane"/>
    <property type="evidence" value="ECO:0007669"/>
    <property type="project" value="UniProtKB-SubCell"/>
</dbReference>
<dbReference type="GO" id="GO:0045259">
    <property type="term" value="C:proton-transporting ATP synthase complex"/>
    <property type="evidence" value="ECO:0007669"/>
    <property type="project" value="UniProtKB-KW"/>
</dbReference>
<dbReference type="GO" id="GO:0043531">
    <property type="term" value="F:ADP binding"/>
    <property type="evidence" value="ECO:0007669"/>
    <property type="project" value="TreeGrafter"/>
</dbReference>
<dbReference type="GO" id="GO:0005524">
    <property type="term" value="F:ATP binding"/>
    <property type="evidence" value="ECO:0007669"/>
    <property type="project" value="UniProtKB-UniRule"/>
</dbReference>
<dbReference type="GO" id="GO:0046933">
    <property type="term" value="F:proton-transporting ATP synthase activity, rotational mechanism"/>
    <property type="evidence" value="ECO:0007669"/>
    <property type="project" value="UniProtKB-UniRule"/>
</dbReference>
<dbReference type="CDD" id="cd18113">
    <property type="entry name" value="ATP-synt_F1_alpha_C"/>
    <property type="match status" value="1"/>
</dbReference>
<dbReference type="CDD" id="cd18116">
    <property type="entry name" value="ATP-synt_F1_alpha_N"/>
    <property type="match status" value="1"/>
</dbReference>
<dbReference type="CDD" id="cd01132">
    <property type="entry name" value="F1-ATPase_alpha_CD"/>
    <property type="match status" value="1"/>
</dbReference>
<dbReference type="FunFam" id="1.20.150.20:FF:000001">
    <property type="entry name" value="ATP synthase subunit alpha"/>
    <property type="match status" value="1"/>
</dbReference>
<dbReference type="FunFam" id="3.40.50.300:FF:000002">
    <property type="entry name" value="ATP synthase subunit alpha"/>
    <property type="match status" value="1"/>
</dbReference>
<dbReference type="Gene3D" id="2.40.30.20">
    <property type="match status" value="1"/>
</dbReference>
<dbReference type="Gene3D" id="1.20.150.20">
    <property type="entry name" value="ATP synthase alpha/beta chain, C-terminal domain"/>
    <property type="match status" value="1"/>
</dbReference>
<dbReference type="Gene3D" id="3.40.50.300">
    <property type="entry name" value="P-loop containing nucleotide triphosphate hydrolases"/>
    <property type="match status" value="1"/>
</dbReference>
<dbReference type="HAMAP" id="MF_01346">
    <property type="entry name" value="ATP_synth_alpha_bact"/>
    <property type="match status" value="1"/>
</dbReference>
<dbReference type="InterPro" id="IPR023366">
    <property type="entry name" value="ATP_synth_asu-like_sf"/>
</dbReference>
<dbReference type="InterPro" id="IPR000793">
    <property type="entry name" value="ATP_synth_asu_C"/>
</dbReference>
<dbReference type="InterPro" id="IPR038376">
    <property type="entry name" value="ATP_synth_asu_C_sf"/>
</dbReference>
<dbReference type="InterPro" id="IPR033732">
    <property type="entry name" value="ATP_synth_F1_a_nt-bd_dom"/>
</dbReference>
<dbReference type="InterPro" id="IPR005294">
    <property type="entry name" value="ATP_synth_F1_asu"/>
</dbReference>
<dbReference type="InterPro" id="IPR020003">
    <property type="entry name" value="ATPase_a/bsu_AS"/>
</dbReference>
<dbReference type="InterPro" id="IPR004100">
    <property type="entry name" value="ATPase_F1/V1/A1_a/bsu_N"/>
</dbReference>
<dbReference type="InterPro" id="IPR036121">
    <property type="entry name" value="ATPase_F1/V1/A1_a/bsu_N_sf"/>
</dbReference>
<dbReference type="InterPro" id="IPR000194">
    <property type="entry name" value="ATPase_F1/V1/A1_a/bsu_nucl-bd"/>
</dbReference>
<dbReference type="InterPro" id="IPR027417">
    <property type="entry name" value="P-loop_NTPase"/>
</dbReference>
<dbReference type="NCBIfam" id="TIGR00962">
    <property type="entry name" value="atpA"/>
    <property type="match status" value="1"/>
</dbReference>
<dbReference type="NCBIfam" id="NF009884">
    <property type="entry name" value="PRK13343.1"/>
    <property type="match status" value="1"/>
</dbReference>
<dbReference type="PANTHER" id="PTHR48082">
    <property type="entry name" value="ATP SYNTHASE SUBUNIT ALPHA, MITOCHONDRIAL"/>
    <property type="match status" value="1"/>
</dbReference>
<dbReference type="PANTHER" id="PTHR48082:SF2">
    <property type="entry name" value="ATP SYNTHASE SUBUNIT ALPHA, MITOCHONDRIAL"/>
    <property type="match status" value="1"/>
</dbReference>
<dbReference type="Pfam" id="PF00006">
    <property type="entry name" value="ATP-synt_ab"/>
    <property type="match status" value="1"/>
</dbReference>
<dbReference type="Pfam" id="PF00306">
    <property type="entry name" value="ATP-synt_ab_C"/>
    <property type="match status" value="1"/>
</dbReference>
<dbReference type="Pfam" id="PF02874">
    <property type="entry name" value="ATP-synt_ab_N"/>
    <property type="match status" value="1"/>
</dbReference>
<dbReference type="PIRSF" id="PIRSF039088">
    <property type="entry name" value="F_ATPase_subunit_alpha"/>
    <property type="match status" value="1"/>
</dbReference>
<dbReference type="SUPFAM" id="SSF47917">
    <property type="entry name" value="C-terminal domain of alpha and beta subunits of F1 ATP synthase"/>
    <property type="match status" value="1"/>
</dbReference>
<dbReference type="SUPFAM" id="SSF50615">
    <property type="entry name" value="N-terminal domain of alpha and beta subunits of F1 ATP synthase"/>
    <property type="match status" value="1"/>
</dbReference>
<dbReference type="SUPFAM" id="SSF52540">
    <property type="entry name" value="P-loop containing nucleoside triphosphate hydrolases"/>
    <property type="match status" value="1"/>
</dbReference>
<dbReference type="PROSITE" id="PS00152">
    <property type="entry name" value="ATPASE_ALPHA_BETA"/>
    <property type="match status" value="1"/>
</dbReference>
<sequence>MRVNPDELTKVIEERIKSYESGEIKEIGWVMQVSDGIVRAYGLKDVMTNELVEIETSEGEKIYGIAMNLEEDNVGIITLGDYKGIKEGDKLVRTNRIIEVPVGEKLLGRVVNPLGMPLDGKGEINTDDFYPIERKAMGVVTRKPVDTPLQTGLKVLDALIPIGRGQRELIIGDRQTGKTAIATDTIINQKGKNVFCIYVSIGQKSSGLARTIDNLEKYGAMDYTVVVAADASDPASLQYIAPYAGAAIGEYFMFNGKDALVIYDDLTKHAAAYREISLLLRRPPGREAYPGDIFYLHSRLLERASRLNENYGNGSLTALPIIETQANDISAYIPTNVISITDGQIYLETGLFNAGIRPAVNIGLSVSRVGGDAQTKAMKRVAGSLKLDLAQYRELESFTQFAADLDEATKKQLTKGEKLTELMKQPQYSPMEMEEQVAVIYAANEGYLDQIPTDRISDFERQFLAYLKENYRDTLNKIRESKDIADEIKKELNEAISKFLNVFR</sequence>
<feature type="chain" id="PRO_1000086885" description="ATP synthase subunit alpha">
    <location>
        <begin position="1"/>
        <end position="504"/>
    </location>
</feature>
<feature type="binding site" evidence="1">
    <location>
        <begin position="172"/>
        <end position="179"/>
    </location>
    <ligand>
        <name>ATP</name>
        <dbReference type="ChEBI" id="CHEBI:30616"/>
    </ligand>
</feature>
<feature type="site" description="Required for activity" evidence="1">
    <location>
        <position position="365"/>
    </location>
</feature>
<evidence type="ECO:0000255" key="1">
    <source>
        <dbReference type="HAMAP-Rule" id="MF_01346"/>
    </source>
</evidence>
<keyword id="KW-0066">ATP synthesis</keyword>
<keyword id="KW-0067">ATP-binding</keyword>
<keyword id="KW-0997">Cell inner membrane</keyword>
<keyword id="KW-1003">Cell membrane</keyword>
<keyword id="KW-0139">CF(1)</keyword>
<keyword id="KW-0375">Hydrogen ion transport</keyword>
<keyword id="KW-0406">Ion transport</keyword>
<keyword id="KW-0472">Membrane</keyword>
<keyword id="KW-0547">Nucleotide-binding</keyword>
<keyword id="KW-1278">Translocase</keyword>
<keyword id="KW-0813">Transport</keyword>
<reference key="1">
    <citation type="submission" date="2007-11" db="EMBL/GenBank/DDBJ databases">
        <title>Complete sequence of Petroga mobilis SJ95.</title>
        <authorList>
            <consortium name="US DOE Joint Genome Institute"/>
            <person name="Copeland A."/>
            <person name="Lucas S."/>
            <person name="Lapidus A."/>
            <person name="Barry K."/>
            <person name="Glavina del Rio T."/>
            <person name="Dalin E."/>
            <person name="Tice H."/>
            <person name="Pitluck S."/>
            <person name="Meincke L."/>
            <person name="Brettin T."/>
            <person name="Bruce D."/>
            <person name="Detter J.C."/>
            <person name="Han C."/>
            <person name="Kuske C.R."/>
            <person name="Schmutz J."/>
            <person name="Larimer F."/>
            <person name="Land M."/>
            <person name="Hauser L."/>
            <person name="Kyrpides N."/>
            <person name="Mikhailova N."/>
            <person name="Noll K."/>
            <person name="Richardson P."/>
        </authorList>
    </citation>
    <scope>NUCLEOTIDE SEQUENCE [LARGE SCALE GENOMIC DNA]</scope>
    <source>
        <strain>DSM 10674 / SJ95</strain>
    </source>
</reference>
<protein>
    <recommendedName>
        <fullName evidence="1">ATP synthase subunit alpha</fullName>
        <ecNumber evidence="1">7.1.2.2</ecNumber>
    </recommendedName>
    <alternativeName>
        <fullName evidence="1">ATP synthase F1 sector subunit alpha</fullName>
    </alternativeName>
    <alternativeName>
        <fullName evidence="1">F-ATPase subunit alpha</fullName>
    </alternativeName>
</protein>
<accession>A9BFX5</accession>
<gene>
    <name evidence="1" type="primary">atpA</name>
    <name type="ordered locus">Pmob_0747</name>
</gene>
<comment type="function">
    <text evidence="1">Produces ATP from ADP in the presence of a proton gradient across the membrane. The alpha chain is a regulatory subunit.</text>
</comment>
<comment type="catalytic activity">
    <reaction evidence="1">
        <text>ATP + H2O + 4 H(+)(in) = ADP + phosphate + 5 H(+)(out)</text>
        <dbReference type="Rhea" id="RHEA:57720"/>
        <dbReference type="ChEBI" id="CHEBI:15377"/>
        <dbReference type="ChEBI" id="CHEBI:15378"/>
        <dbReference type="ChEBI" id="CHEBI:30616"/>
        <dbReference type="ChEBI" id="CHEBI:43474"/>
        <dbReference type="ChEBI" id="CHEBI:456216"/>
        <dbReference type="EC" id="7.1.2.2"/>
    </reaction>
</comment>
<comment type="subunit">
    <text evidence="1">F-type ATPases have 2 components, CF(1) - the catalytic core - and CF(0) - the membrane proton channel. CF(1) has five subunits: alpha(3), beta(3), gamma(1), delta(1), epsilon(1). CF(0) has three main subunits: a(1), b(2) and c(9-12). The alpha and beta chains form an alternating ring which encloses part of the gamma chain. CF(1) is attached to CF(0) by a central stalk formed by the gamma and epsilon chains, while a peripheral stalk is formed by the delta and b chains.</text>
</comment>
<comment type="subcellular location">
    <subcellularLocation>
        <location evidence="1">Cell inner membrane</location>
        <topology evidence="1">Peripheral membrane protein</topology>
    </subcellularLocation>
</comment>
<comment type="similarity">
    <text evidence="1">Belongs to the ATPase alpha/beta chains family.</text>
</comment>